<name>SYBL_SCHMA</name>
<protein>
    <recommendedName>
        <fullName>Synaptobrevin-like protein</fullName>
    </recommendedName>
</protein>
<keyword id="KW-0025">Alternative splicing</keyword>
<keyword id="KW-0175">Coiled coil</keyword>
<keyword id="KW-0968">Cytoplasmic vesicle</keyword>
<keyword id="KW-0472">Membrane</keyword>
<keyword id="KW-1185">Reference proteome</keyword>
<keyword id="KW-0770">Synapse</keyword>
<keyword id="KW-0771">Synaptosome</keyword>
<keyword id="KW-0812">Transmembrane</keyword>
<keyword id="KW-1133">Transmembrane helix</keyword>
<proteinExistence type="evidence at transcript level"/>
<reference key="1">
    <citation type="journal article" date="1995" name="J. Biol. Chem.">
        <title>RNA trans-splicing in flatworms. Analysis of trans-spliced mRNAs and genes in the human parasite, Schistosoma mansoni.</title>
        <authorList>
            <person name="Davis R.E."/>
            <person name="Hardwick C."/>
            <person name="Tavernier P."/>
            <person name="Hodgson S."/>
            <person name="Singh H."/>
        </authorList>
    </citation>
    <scope>NUCLEOTIDE SEQUENCE [MRNA] (ISOFORMS LONG AND SHORT)</scope>
    <source>
        <strain>Puerto Rican</strain>
    </source>
</reference>
<organism>
    <name type="scientific">Schistosoma mansoni</name>
    <name type="common">Blood fluke</name>
    <dbReference type="NCBI Taxonomy" id="6183"/>
    <lineage>
        <taxon>Eukaryota</taxon>
        <taxon>Metazoa</taxon>
        <taxon>Spiralia</taxon>
        <taxon>Lophotrochozoa</taxon>
        <taxon>Platyhelminthes</taxon>
        <taxon>Trematoda</taxon>
        <taxon>Digenea</taxon>
        <taxon>Strigeidida</taxon>
        <taxon>Schistosomatoidea</taxon>
        <taxon>Schistosomatidae</taxon>
        <taxon>Schistosoma</taxon>
    </lineage>
</organism>
<sequence length="131" mass="14842">MLHITTMTDKAPIKTNKRLQQTQAQVNEVVDIMRVNVDKVLERDKNLSELDGRADALQAGASQFEASAGKLKRKFWWKNCKMLAVLGVLVVILIIVLIVWVVSEQKNKVEQSEHSSHHLVMDNSSHLLSEQ</sequence>
<dbReference type="EMBL" id="U30183">
    <property type="protein sequence ID" value="AAC46892.1"/>
    <property type="molecule type" value="mRNA"/>
</dbReference>
<dbReference type="EMBL" id="U30182">
    <property type="protein sequence ID" value="AAC46891.1"/>
    <property type="molecule type" value="mRNA"/>
</dbReference>
<dbReference type="EMBL" id="U30181">
    <property type="protein sequence ID" value="AAC46890.1"/>
    <property type="molecule type" value="mRNA"/>
</dbReference>
<dbReference type="EMBL" id="U30180">
    <property type="protein sequence ID" value="AAC46889.1"/>
    <property type="molecule type" value="mRNA"/>
</dbReference>
<dbReference type="EMBL" id="U30291">
    <property type="protein sequence ID" value="AAC46901.1"/>
    <property type="molecule type" value="Genomic_DNA"/>
</dbReference>
<dbReference type="SMR" id="Q27236"/>
<dbReference type="FunCoup" id="Q27236">
    <property type="interactions" value="447"/>
</dbReference>
<dbReference type="STRING" id="6183.Q27236"/>
<dbReference type="eggNOG" id="KOG0860">
    <property type="taxonomic scope" value="Eukaryota"/>
</dbReference>
<dbReference type="HOGENOM" id="CLU_1333420_0_0_1"/>
<dbReference type="InParanoid" id="Q27236"/>
<dbReference type="Proteomes" id="UP000008854">
    <property type="component" value="Unassembled WGS sequence"/>
</dbReference>
<dbReference type="GO" id="GO:0043005">
    <property type="term" value="C:neuron projection"/>
    <property type="evidence" value="ECO:0007669"/>
    <property type="project" value="UniProtKB-KW"/>
</dbReference>
<dbReference type="GO" id="GO:0030672">
    <property type="term" value="C:synaptic vesicle membrane"/>
    <property type="evidence" value="ECO:0007669"/>
    <property type="project" value="UniProtKB-SubCell"/>
</dbReference>
<dbReference type="GO" id="GO:0016192">
    <property type="term" value="P:vesicle-mediated transport"/>
    <property type="evidence" value="ECO:0007669"/>
    <property type="project" value="InterPro"/>
</dbReference>
<dbReference type="CDD" id="cd15870">
    <property type="entry name" value="R-SNARE_VAMP2"/>
    <property type="match status" value="1"/>
</dbReference>
<dbReference type="Gene3D" id="1.20.5.110">
    <property type="match status" value="1"/>
</dbReference>
<dbReference type="InterPro" id="IPR001388">
    <property type="entry name" value="Synaptobrevin-like"/>
</dbReference>
<dbReference type="InterPro" id="IPR016444">
    <property type="entry name" value="Synaptobrevin/VAMP"/>
</dbReference>
<dbReference type="InterPro" id="IPR042855">
    <property type="entry name" value="V_SNARE_CC"/>
</dbReference>
<dbReference type="PANTHER" id="PTHR45701">
    <property type="entry name" value="SYNAPTOBREVIN FAMILY MEMBER"/>
    <property type="match status" value="1"/>
</dbReference>
<dbReference type="Pfam" id="PF00957">
    <property type="entry name" value="Synaptobrevin"/>
    <property type="match status" value="1"/>
</dbReference>
<dbReference type="PRINTS" id="PR00219">
    <property type="entry name" value="SYNAPTOBREVN"/>
</dbReference>
<dbReference type="SUPFAM" id="SSF58038">
    <property type="entry name" value="SNARE fusion complex"/>
    <property type="match status" value="1"/>
</dbReference>
<dbReference type="PROSITE" id="PS00417">
    <property type="entry name" value="SYNAPTOBREVIN"/>
    <property type="match status" value="1"/>
</dbReference>
<dbReference type="PROSITE" id="PS50892">
    <property type="entry name" value="V_SNARE"/>
    <property type="match status" value="1"/>
</dbReference>
<evidence type="ECO:0000250" key="1"/>
<evidence type="ECO:0000255" key="2"/>
<evidence type="ECO:0000255" key="3">
    <source>
        <dbReference type="PROSITE-ProRule" id="PRU00290"/>
    </source>
</evidence>
<evidence type="ECO:0000256" key="4">
    <source>
        <dbReference type="SAM" id="MobiDB-lite"/>
    </source>
</evidence>
<evidence type="ECO:0000303" key="5">
    <source>
    </source>
</evidence>
<evidence type="ECO:0000305" key="6"/>
<feature type="chain" id="PRO_0000206763" description="Synaptobrevin-like protein">
    <location>
        <begin position="1"/>
        <end position="131"/>
    </location>
</feature>
<feature type="topological domain" description="Cytoplasmic" evidence="6">
    <location>
        <begin position="1"/>
        <end position="81"/>
    </location>
</feature>
<feature type="transmembrane region" description="Helical; Anchor for type IV membrane protein" evidence="2">
    <location>
        <begin position="82"/>
        <end position="102"/>
    </location>
</feature>
<feature type="topological domain" description="Vesicular" evidence="6">
    <location>
        <begin position="103"/>
        <end position="131"/>
    </location>
</feature>
<feature type="domain" description="v-SNARE coiled-coil homology" evidence="3">
    <location>
        <begin position="18"/>
        <end position="78"/>
    </location>
</feature>
<feature type="region of interest" description="Disordered" evidence="4">
    <location>
        <begin position="112"/>
        <end position="131"/>
    </location>
</feature>
<feature type="compositionally biased region" description="Polar residues" evidence="4">
    <location>
        <begin position="122"/>
        <end position="131"/>
    </location>
</feature>
<feature type="splice variant" id="VSP_006329" description="In isoform Short." evidence="5">
    <original>MLAVLGVLVVILIIVLIVWVVSEQKNKVEQSEHSSHHLVMDNSSHLLSEQ</original>
    <variation>YGSFLNKKIKLNKVNIHLIIL</variation>
    <location>
        <begin position="82"/>
        <end position="131"/>
    </location>
</feature>
<comment type="function">
    <text>Unknown, but synaptobrevins are presumed to be involved in targeting and fusion of synaptic vesicles with the presynaptic membrane as well as in neurotransmitter release.</text>
</comment>
<comment type="subcellular location">
    <subcellularLocation>
        <location evidence="1">Cytoplasmic vesicle</location>
        <location evidence="1">Secretory vesicle</location>
        <location evidence="1">Synaptic vesicle membrane</location>
        <topology evidence="1">Single-pass type IV membrane protein</topology>
    </subcellularLocation>
    <subcellularLocation>
        <location evidence="1">Synapse</location>
        <location evidence="1">Synaptosome</location>
    </subcellularLocation>
    <text evidence="1">Neuronal synaptic vesicles.</text>
</comment>
<comment type="alternative products">
    <event type="alternative splicing"/>
    <isoform>
        <id>Q27236-1</id>
        <name>Long</name>
        <sequence type="displayed"/>
    </isoform>
    <isoform>
        <id>Q27236-2</id>
        <name>Short</name>
        <sequence type="described" ref="VSP_006329"/>
    </isoform>
</comment>
<comment type="similarity">
    <text evidence="6">Belongs to the synaptobrevin family.</text>
</comment>
<accession>Q27236</accession>
<accession>Q26550</accession>
<accession>Q27353</accession>